<gene>
    <name evidence="1" type="primary">rhaD</name>
    <name type="ordered locus">ECA0438</name>
</gene>
<comment type="function">
    <text evidence="1">Catalyzes the reversible cleavage of L-rhamnulose-1-phosphate to dihydroxyacetone phosphate (DHAP) and L-lactaldehyde.</text>
</comment>
<comment type="catalytic activity">
    <reaction evidence="1">
        <text>L-rhamnulose 1-phosphate = (S)-lactaldehyde + dihydroxyacetone phosphate</text>
        <dbReference type="Rhea" id="RHEA:19689"/>
        <dbReference type="ChEBI" id="CHEBI:18041"/>
        <dbReference type="ChEBI" id="CHEBI:57642"/>
        <dbReference type="ChEBI" id="CHEBI:58313"/>
        <dbReference type="EC" id="4.1.2.19"/>
    </reaction>
</comment>
<comment type="cofactor">
    <cofactor evidence="1">
        <name>Zn(2+)</name>
        <dbReference type="ChEBI" id="CHEBI:29105"/>
    </cofactor>
    <text evidence="1">Binds 1 zinc ion per subunit.</text>
</comment>
<comment type="pathway">
    <text evidence="1">Carbohydrate degradation; L-rhamnose degradation; glycerone phosphate from L-rhamnose: step 3/3.</text>
</comment>
<comment type="subunit">
    <text evidence="1">Homotetramer.</text>
</comment>
<comment type="subcellular location">
    <subcellularLocation>
        <location evidence="1">Cytoplasm</location>
    </subcellularLocation>
</comment>
<comment type="similarity">
    <text evidence="1">Belongs to the aldolase class II family. RhaD subfamily.</text>
</comment>
<protein>
    <recommendedName>
        <fullName evidence="1">Rhamnulose-1-phosphate aldolase</fullName>
        <ecNumber evidence="1">4.1.2.19</ecNumber>
    </recommendedName>
</protein>
<accession>Q6DA25</accession>
<dbReference type="EC" id="4.1.2.19" evidence="1"/>
<dbReference type="EMBL" id="BX950851">
    <property type="protein sequence ID" value="CAG73353.1"/>
    <property type="molecule type" value="Genomic_DNA"/>
</dbReference>
<dbReference type="RefSeq" id="WP_011092060.1">
    <property type="nucleotide sequence ID" value="NC_004547.2"/>
</dbReference>
<dbReference type="SMR" id="Q6DA25"/>
<dbReference type="STRING" id="218491.ECA0438"/>
<dbReference type="GeneID" id="57207292"/>
<dbReference type="KEGG" id="eca:ECA0438"/>
<dbReference type="eggNOG" id="COG0235">
    <property type="taxonomic scope" value="Bacteria"/>
</dbReference>
<dbReference type="HOGENOM" id="CLU_076831_0_0_6"/>
<dbReference type="OrthoDB" id="9784634at2"/>
<dbReference type="UniPathway" id="UPA00541">
    <property type="reaction ID" value="UER00603"/>
</dbReference>
<dbReference type="Proteomes" id="UP000007966">
    <property type="component" value="Chromosome"/>
</dbReference>
<dbReference type="GO" id="GO:0005829">
    <property type="term" value="C:cytosol"/>
    <property type="evidence" value="ECO:0007669"/>
    <property type="project" value="TreeGrafter"/>
</dbReference>
<dbReference type="GO" id="GO:0046872">
    <property type="term" value="F:metal ion binding"/>
    <property type="evidence" value="ECO:0007669"/>
    <property type="project" value="UniProtKB-KW"/>
</dbReference>
<dbReference type="GO" id="GO:0008994">
    <property type="term" value="F:rhamnulose-1-phosphate aldolase activity"/>
    <property type="evidence" value="ECO:0007669"/>
    <property type="project" value="UniProtKB-UniRule"/>
</dbReference>
<dbReference type="GO" id="GO:0019323">
    <property type="term" value="P:pentose catabolic process"/>
    <property type="evidence" value="ECO:0007669"/>
    <property type="project" value="TreeGrafter"/>
</dbReference>
<dbReference type="GO" id="GO:0019301">
    <property type="term" value="P:rhamnose catabolic process"/>
    <property type="evidence" value="ECO:0007669"/>
    <property type="project" value="UniProtKB-UniRule"/>
</dbReference>
<dbReference type="CDD" id="cd00398">
    <property type="entry name" value="Aldolase_II"/>
    <property type="match status" value="1"/>
</dbReference>
<dbReference type="FunFam" id="3.40.225.10:FF:000006">
    <property type="entry name" value="Rhamnulose-1-phosphate aldolase"/>
    <property type="match status" value="1"/>
</dbReference>
<dbReference type="Gene3D" id="3.40.225.10">
    <property type="entry name" value="Class II aldolase/adducin N-terminal domain"/>
    <property type="match status" value="1"/>
</dbReference>
<dbReference type="HAMAP" id="MF_00770">
    <property type="entry name" value="RhaD"/>
    <property type="match status" value="1"/>
</dbReference>
<dbReference type="InterPro" id="IPR050197">
    <property type="entry name" value="Aldolase_class_II_sugar_metab"/>
</dbReference>
<dbReference type="InterPro" id="IPR001303">
    <property type="entry name" value="Aldolase_II/adducin_N"/>
</dbReference>
<dbReference type="InterPro" id="IPR036409">
    <property type="entry name" value="Aldolase_II/adducin_N_sf"/>
</dbReference>
<dbReference type="InterPro" id="IPR013447">
    <property type="entry name" value="Rhamnulose-1-P_Aldolase"/>
</dbReference>
<dbReference type="NCBIfam" id="NF002963">
    <property type="entry name" value="PRK03634.1"/>
    <property type="match status" value="1"/>
</dbReference>
<dbReference type="NCBIfam" id="TIGR02624">
    <property type="entry name" value="rhamnu_1P_ald"/>
    <property type="match status" value="1"/>
</dbReference>
<dbReference type="PANTHER" id="PTHR22789">
    <property type="entry name" value="FUCULOSE PHOSPHATE ALDOLASE"/>
    <property type="match status" value="1"/>
</dbReference>
<dbReference type="PANTHER" id="PTHR22789:SF16">
    <property type="entry name" value="RHAMNULOSE-1-PHOSPHATE ALDOLASE"/>
    <property type="match status" value="1"/>
</dbReference>
<dbReference type="Pfam" id="PF00596">
    <property type="entry name" value="Aldolase_II"/>
    <property type="match status" value="1"/>
</dbReference>
<dbReference type="SMART" id="SM01007">
    <property type="entry name" value="Aldolase_II"/>
    <property type="match status" value="1"/>
</dbReference>
<dbReference type="SUPFAM" id="SSF53639">
    <property type="entry name" value="AraD/HMP-PK domain-like"/>
    <property type="match status" value="1"/>
</dbReference>
<reference key="1">
    <citation type="journal article" date="2004" name="Proc. Natl. Acad. Sci. U.S.A.">
        <title>Genome sequence of the enterobacterial phytopathogen Erwinia carotovora subsp. atroseptica and characterization of virulence factors.</title>
        <authorList>
            <person name="Bell K.S."/>
            <person name="Sebaihia M."/>
            <person name="Pritchard L."/>
            <person name="Holden M.T.G."/>
            <person name="Hyman L.J."/>
            <person name="Holeva M.C."/>
            <person name="Thomson N.R."/>
            <person name="Bentley S.D."/>
            <person name="Churcher L.J.C."/>
            <person name="Mungall K."/>
            <person name="Atkin R."/>
            <person name="Bason N."/>
            <person name="Brooks K."/>
            <person name="Chillingworth T."/>
            <person name="Clark K."/>
            <person name="Doggett J."/>
            <person name="Fraser A."/>
            <person name="Hance Z."/>
            <person name="Hauser H."/>
            <person name="Jagels K."/>
            <person name="Moule S."/>
            <person name="Norbertczak H."/>
            <person name="Ormond D."/>
            <person name="Price C."/>
            <person name="Quail M.A."/>
            <person name="Sanders M."/>
            <person name="Walker D."/>
            <person name="Whitehead S."/>
            <person name="Salmond G.P.C."/>
            <person name="Birch P.R.J."/>
            <person name="Parkhill J."/>
            <person name="Toth I.K."/>
        </authorList>
    </citation>
    <scope>NUCLEOTIDE SEQUENCE [LARGE SCALE GENOMIC DNA]</scope>
    <source>
        <strain>SCRI 1043 / ATCC BAA-672</strain>
    </source>
</reference>
<name>RHAD_PECAS</name>
<organism>
    <name type="scientific">Pectobacterium atrosepticum (strain SCRI 1043 / ATCC BAA-672)</name>
    <name type="common">Erwinia carotovora subsp. atroseptica</name>
    <dbReference type="NCBI Taxonomy" id="218491"/>
    <lineage>
        <taxon>Bacteria</taxon>
        <taxon>Pseudomonadati</taxon>
        <taxon>Pseudomonadota</taxon>
        <taxon>Gammaproteobacteria</taxon>
        <taxon>Enterobacterales</taxon>
        <taxon>Pectobacteriaceae</taxon>
        <taxon>Pectobacterium</taxon>
    </lineage>
</organism>
<evidence type="ECO:0000255" key="1">
    <source>
        <dbReference type="HAMAP-Rule" id="MF_00770"/>
    </source>
</evidence>
<sequence length="274" mass="30199">MQAILSSWFVQGMIKATSDMWLKGWDERNGGNVSLRLTAEDVTPYESDFSPQPRHEALSQPMPELADCWFIVTGSGKFFRNVQLDPADSLVVLQVDSDGKGYRIFWGLTNGGLPTSELASHFQSHIVRMGVTHGRDRVIMHCHATNLIALSYVLELNTATFTRELWEGSTECLVVFPDGVGIVPWMVPGTDSIGDATSEQMKRHSLVLWPFHGIFGTGPTLDEAFGLIDTAEKSAEVMVKVRSMGGKKQTISTEELIALGKRFGVTPLEAALRV</sequence>
<feature type="chain" id="PRO_0000209661" description="Rhamnulose-1-phosphate aldolase">
    <location>
        <begin position="1"/>
        <end position="274"/>
    </location>
</feature>
<feature type="active site" evidence="1">
    <location>
        <position position="117"/>
    </location>
</feature>
<feature type="binding site" evidence="1">
    <location>
        <position position="141"/>
    </location>
    <ligand>
        <name>Zn(2+)</name>
        <dbReference type="ChEBI" id="CHEBI:29105"/>
    </ligand>
</feature>
<feature type="binding site" evidence="1">
    <location>
        <position position="143"/>
    </location>
    <ligand>
        <name>Zn(2+)</name>
        <dbReference type="ChEBI" id="CHEBI:29105"/>
    </ligand>
</feature>
<feature type="binding site" evidence="1">
    <location>
        <position position="212"/>
    </location>
    <ligand>
        <name>Zn(2+)</name>
        <dbReference type="ChEBI" id="CHEBI:29105"/>
    </ligand>
</feature>
<proteinExistence type="inferred from homology"/>
<keyword id="KW-0963">Cytoplasm</keyword>
<keyword id="KW-0456">Lyase</keyword>
<keyword id="KW-0479">Metal-binding</keyword>
<keyword id="KW-1185">Reference proteome</keyword>
<keyword id="KW-0684">Rhamnose metabolism</keyword>
<keyword id="KW-0862">Zinc</keyword>